<sequence>MHITQLVLRHFRCFDVVDFFPLPGLNFFIGENGSGKTSLLEAVHLMGYGRSFRGRVRDGLIRHGSENLEIFVDWQETALINARRHRAGLSHYGQEWIGRLDGQKIIHLASLCAALAVITFESSSYQLINSNAELRRRFLDWGLFHVEPDFLDLWRCYTHVLKQRNSLLKQKEELAMLEAWDQKLSEVGEQLTFRRFQYLERLKQRVIPLISRITPNLKIHGFNFNHGWRRHELPLIDALFISRERDYQYGYTSLGPHRSDWTPQFSSIPGVHVLSRGQGKLITLMCLLAQAQDFFDQRGEWPILSLDDLASELDQKHQWRVLEMLAEIPAQVLITGTEIPQGLKPFFSVGAMFHVEHGAITRMF</sequence>
<organism>
    <name type="scientific">Xylella fastidiosa (strain M12)</name>
    <dbReference type="NCBI Taxonomy" id="405440"/>
    <lineage>
        <taxon>Bacteria</taxon>
        <taxon>Pseudomonadati</taxon>
        <taxon>Pseudomonadota</taxon>
        <taxon>Gammaproteobacteria</taxon>
        <taxon>Lysobacterales</taxon>
        <taxon>Lysobacteraceae</taxon>
        <taxon>Xylella</taxon>
    </lineage>
</organism>
<proteinExistence type="inferred from homology"/>
<protein>
    <recommendedName>
        <fullName evidence="1">DNA replication and repair protein RecF</fullName>
    </recommendedName>
</protein>
<keyword id="KW-0067">ATP-binding</keyword>
<keyword id="KW-0963">Cytoplasm</keyword>
<keyword id="KW-0227">DNA damage</keyword>
<keyword id="KW-0234">DNA repair</keyword>
<keyword id="KW-0235">DNA replication</keyword>
<keyword id="KW-0238">DNA-binding</keyword>
<keyword id="KW-0547">Nucleotide-binding</keyword>
<keyword id="KW-0742">SOS response</keyword>
<feature type="chain" id="PRO_1000121170" description="DNA replication and repair protein RecF">
    <location>
        <begin position="1"/>
        <end position="364"/>
    </location>
</feature>
<feature type="binding site" evidence="1">
    <location>
        <begin position="30"/>
        <end position="37"/>
    </location>
    <ligand>
        <name>ATP</name>
        <dbReference type="ChEBI" id="CHEBI:30616"/>
    </ligand>
</feature>
<accession>B0U1G7</accession>
<comment type="function">
    <text evidence="1">The RecF protein is involved in DNA metabolism; it is required for DNA replication and normal SOS inducibility. RecF binds preferentially to single-stranded, linear DNA. It also seems to bind ATP.</text>
</comment>
<comment type="subcellular location">
    <subcellularLocation>
        <location evidence="1">Cytoplasm</location>
    </subcellularLocation>
</comment>
<comment type="similarity">
    <text evidence="1">Belongs to the RecF family.</text>
</comment>
<name>RECF_XYLFM</name>
<gene>
    <name evidence="1" type="primary">recF</name>
    <name type="ordered locus">Xfasm12_0003</name>
</gene>
<reference key="1">
    <citation type="journal article" date="2010" name="J. Bacteriol.">
        <title>Whole genome sequences of two Xylella fastidiosa strains (M12 and M23) causing almond leaf scorch disease in California.</title>
        <authorList>
            <person name="Chen J."/>
            <person name="Xie G."/>
            <person name="Han S."/>
            <person name="Chertkov O."/>
            <person name="Sims D."/>
            <person name="Civerolo E.L."/>
        </authorList>
    </citation>
    <scope>NUCLEOTIDE SEQUENCE [LARGE SCALE GENOMIC DNA]</scope>
    <source>
        <strain>M12</strain>
    </source>
</reference>
<dbReference type="EMBL" id="CP000941">
    <property type="protein sequence ID" value="ACA11057.1"/>
    <property type="molecule type" value="Genomic_DNA"/>
</dbReference>
<dbReference type="RefSeq" id="WP_004085090.1">
    <property type="nucleotide sequence ID" value="NC_010513.1"/>
</dbReference>
<dbReference type="SMR" id="B0U1G7"/>
<dbReference type="KEGG" id="xfm:Xfasm12_0003"/>
<dbReference type="HOGENOM" id="CLU_040267_0_0_6"/>
<dbReference type="GO" id="GO:0005737">
    <property type="term" value="C:cytoplasm"/>
    <property type="evidence" value="ECO:0007669"/>
    <property type="project" value="UniProtKB-SubCell"/>
</dbReference>
<dbReference type="GO" id="GO:0005524">
    <property type="term" value="F:ATP binding"/>
    <property type="evidence" value="ECO:0007669"/>
    <property type="project" value="UniProtKB-UniRule"/>
</dbReference>
<dbReference type="GO" id="GO:0003697">
    <property type="term" value="F:single-stranded DNA binding"/>
    <property type="evidence" value="ECO:0007669"/>
    <property type="project" value="UniProtKB-UniRule"/>
</dbReference>
<dbReference type="GO" id="GO:0006260">
    <property type="term" value="P:DNA replication"/>
    <property type="evidence" value="ECO:0007669"/>
    <property type="project" value="UniProtKB-UniRule"/>
</dbReference>
<dbReference type="GO" id="GO:0000731">
    <property type="term" value="P:DNA synthesis involved in DNA repair"/>
    <property type="evidence" value="ECO:0007669"/>
    <property type="project" value="TreeGrafter"/>
</dbReference>
<dbReference type="GO" id="GO:0006302">
    <property type="term" value="P:double-strand break repair"/>
    <property type="evidence" value="ECO:0007669"/>
    <property type="project" value="TreeGrafter"/>
</dbReference>
<dbReference type="GO" id="GO:0009432">
    <property type="term" value="P:SOS response"/>
    <property type="evidence" value="ECO:0007669"/>
    <property type="project" value="UniProtKB-UniRule"/>
</dbReference>
<dbReference type="Gene3D" id="3.40.50.300">
    <property type="entry name" value="P-loop containing nucleotide triphosphate hydrolases"/>
    <property type="match status" value="1"/>
</dbReference>
<dbReference type="Gene3D" id="1.20.1050.90">
    <property type="entry name" value="RecF/RecN/SMC, N-terminal domain"/>
    <property type="match status" value="1"/>
</dbReference>
<dbReference type="HAMAP" id="MF_00365">
    <property type="entry name" value="RecF"/>
    <property type="match status" value="1"/>
</dbReference>
<dbReference type="InterPro" id="IPR001238">
    <property type="entry name" value="DNA-binding_RecF"/>
</dbReference>
<dbReference type="InterPro" id="IPR018078">
    <property type="entry name" value="DNA-binding_RecF_CS"/>
</dbReference>
<dbReference type="InterPro" id="IPR027417">
    <property type="entry name" value="P-loop_NTPase"/>
</dbReference>
<dbReference type="InterPro" id="IPR003395">
    <property type="entry name" value="RecF/RecN/SMC_N"/>
</dbReference>
<dbReference type="InterPro" id="IPR042174">
    <property type="entry name" value="RecF_2"/>
</dbReference>
<dbReference type="NCBIfam" id="TIGR00611">
    <property type="entry name" value="recf"/>
    <property type="match status" value="1"/>
</dbReference>
<dbReference type="PANTHER" id="PTHR32182">
    <property type="entry name" value="DNA REPLICATION AND REPAIR PROTEIN RECF"/>
    <property type="match status" value="1"/>
</dbReference>
<dbReference type="PANTHER" id="PTHR32182:SF0">
    <property type="entry name" value="DNA REPLICATION AND REPAIR PROTEIN RECF"/>
    <property type="match status" value="1"/>
</dbReference>
<dbReference type="Pfam" id="PF02463">
    <property type="entry name" value="SMC_N"/>
    <property type="match status" value="1"/>
</dbReference>
<dbReference type="SUPFAM" id="SSF52540">
    <property type="entry name" value="P-loop containing nucleoside triphosphate hydrolases"/>
    <property type="match status" value="1"/>
</dbReference>
<dbReference type="PROSITE" id="PS00617">
    <property type="entry name" value="RECF_1"/>
    <property type="match status" value="1"/>
</dbReference>
<dbReference type="PROSITE" id="PS00618">
    <property type="entry name" value="RECF_2"/>
    <property type="match status" value="1"/>
</dbReference>
<evidence type="ECO:0000255" key="1">
    <source>
        <dbReference type="HAMAP-Rule" id="MF_00365"/>
    </source>
</evidence>